<sequence length="245" mass="27808">MWIGIISLFPEMFKAITEYGVTGRAVRQNLLEIQYWNPRDFTFDKHKTVDDRPYGGGPGMLMMVQPLRDAIHCAKSVAGDGVKVIYLSPQGRKLDQNGVQELARNQKMIFVCGRYEGIDERLIETEIDEEWSIGDYVLTGGELPAMTLIDAVARFVPCVLGKQASAQEDSFAEGLLDCPHYTRPEQLNGLTVPPVLMSGNHEEIRKWRLKQSLQRTWLRRPELLESLALTDEQSKLLSQIKQENS</sequence>
<feature type="chain" id="PRO_1000082522" description="tRNA (guanine-N(1)-)-methyltransferase">
    <location>
        <begin position="1"/>
        <end position="245"/>
    </location>
</feature>
<feature type="binding site" evidence="1">
    <location>
        <position position="113"/>
    </location>
    <ligand>
        <name>S-adenosyl-L-methionine</name>
        <dbReference type="ChEBI" id="CHEBI:59789"/>
    </ligand>
</feature>
<feature type="binding site" evidence="1">
    <location>
        <begin position="133"/>
        <end position="138"/>
    </location>
    <ligand>
        <name>S-adenosyl-L-methionine</name>
        <dbReference type="ChEBI" id="CHEBI:59789"/>
    </ligand>
</feature>
<protein>
    <recommendedName>
        <fullName evidence="1">tRNA (guanine-N(1)-)-methyltransferase</fullName>
        <ecNumber evidence="1">2.1.1.228</ecNumber>
    </recommendedName>
    <alternativeName>
        <fullName evidence="1">M1G-methyltransferase</fullName>
    </alternativeName>
    <alternativeName>
        <fullName evidence="1">tRNA [GM37] methyltransferase</fullName>
    </alternativeName>
</protein>
<proteinExistence type="inferred from homology"/>
<keyword id="KW-0963">Cytoplasm</keyword>
<keyword id="KW-0489">Methyltransferase</keyword>
<keyword id="KW-0949">S-adenosyl-L-methionine</keyword>
<keyword id="KW-0808">Transferase</keyword>
<keyword id="KW-0819">tRNA processing</keyword>
<dbReference type="EC" id="2.1.1.228" evidence="1"/>
<dbReference type="EMBL" id="CP000947">
    <property type="protein sequence ID" value="ACA31440.1"/>
    <property type="molecule type" value="Genomic_DNA"/>
</dbReference>
<dbReference type="RefSeq" id="WP_011608449.1">
    <property type="nucleotide sequence ID" value="NC_010519.1"/>
</dbReference>
<dbReference type="SMR" id="B0UVM8"/>
<dbReference type="STRING" id="228400.HSM_0167"/>
<dbReference type="GeneID" id="31486445"/>
<dbReference type="KEGG" id="hsm:HSM_0167"/>
<dbReference type="HOGENOM" id="CLU_047363_0_1_6"/>
<dbReference type="GO" id="GO:0005829">
    <property type="term" value="C:cytosol"/>
    <property type="evidence" value="ECO:0007669"/>
    <property type="project" value="TreeGrafter"/>
</dbReference>
<dbReference type="GO" id="GO:0052906">
    <property type="term" value="F:tRNA (guanine(37)-N1)-methyltransferase activity"/>
    <property type="evidence" value="ECO:0007669"/>
    <property type="project" value="UniProtKB-UniRule"/>
</dbReference>
<dbReference type="GO" id="GO:0002939">
    <property type="term" value="P:tRNA N1-guanine methylation"/>
    <property type="evidence" value="ECO:0007669"/>
    <property type="project" value="TreeGrafter"/>
</dbReference>
<dbReference type="CDD" id="cd18080">
    <property type="entry name" value="TrmD-like"/>
    <property type="match status" value="1"/>
</dbReference>
<dbReference type="FunFam" id="1.10.1270.20:FF:000001">
    <property type="entry name" value="tRNA (guanine-N(1)-)-methyltransferase"/>
    <property type="match status" value="1"/>
</dbReference>
<dbReference type="FunFam" id="3.40.1280.10:FF:000001">
    <property type="entry name" value="tRNA (guanine-N(1)-)-methyltransferase"/>
    <property type="match status" value="1"/>
</dbReference>
<dbReference type="Gene3D" id="3.40.1280.10">
    <property type="match status" value="1"/>
</dbReference>
<dbReference type="Gene3D" id="1.10.1270.20">
    <property type="entry name" value="tRNA(m1g37)methyltransferase, domain 2"/>
    <property type="match status" value="1"/>
</dbReference>
<dbReference type="HAMAP" id="MF_00605">
    <property type="entry name" value="TrmD"/>
    <property type="match status" value="1"/>
</dbReference>
<dbReference type="InterPro" id="IPR029028">
    <property type="entry name" value="Alpha/beta_knot_MTases"/>
</dbReference>
<dbReference type="InterPro" id="IPR023148">
    <property type="entry name" value="tRNA_m1G_MeTrfase_C_sf"/>
</dbReference>
<dbReference type="InterPro" id="IPR002649">
    <property type="entry name" value="tRNA_m1G_MeTrfase_TrmD"/>
</dbReference>
<dbReference type="InterPro" id="IPR029026">
    <property type="entry name" value="tRNA_m1G_MTases_N"/>
</dbReference>
<dbReference type="InterPro" id="IPR016009">
    <property type="entry name" value="tRNA_MeTrfase_TRMD/TRM10"/>
</dbReference>
<dbReference type="NCBIfam" id="NF000648">
    <property type="entry name" value="PRK00026.1"/>
    <property type="match status" value="1"/>
</dbReference>
<dbReference type="NCBIfam" id="TIGR00088">
    <property type="entry name" value="trmD"/>
    <property type="match status" value="1"/>
</dbReference>
<dbReference type="PANTHER" id="PTHR46417">
    <property type="entry name" value="TRNA (GUANINE-N(1)-)-METHYLTRANSFERASE"/>
    <property type="match status" value="1"/>
</dbReference>
<dbReference type="PANTHER" id="PTHR46417:SF1">
    <property type="entry name" value="TRNA (GUANINE-N(1)-)-METHYLTRANSFERASE"/>
    <property type="match status" value="1"/>
</dbReference>
<dbReference type="Pfam" id="PF01746">
    <property type="entry name" value="tRNA_m1G_MT"/>
    <property type="match status" value="1"/>
</dbReference>
<dbReference type="PIRSF" id="PIRSF000386">
    <property type="entry name" value="tRNA_mtase"/>
    <property type="match status" value="1"/>
</dbReference>
<dbReference type="SUPFAM" id="SSF75217">
    <property type="entry name" value="alpha/beta knot"/>
    <property type="match status" value="1"/>
</dbReference>
<accession>B0UVM8</accession>
<gene>
    <name evidence="1" type="primary">trmD</name>
    <name type="ordered locus">HSM_0167</name>
</gene>
<organism>
    <name type="scientific">Histophilus somni (strain 2336)</name>
    <name type="common">Haemophilus somnus</name>
    <dbReference type="NCBI Taxonomy" id="228400"/>
    <lineage>
        <taxon>Bacteria</taxon>
        <taxon>Pseudomonadati</taxon>
        <taxon>Pseudomonadota</taxon>
        <taxon>Gammaproteobacteria</taxon>
        <taxon>Pasteurellales</taxon>
        <taxon>Pasteurellaceae</taxon>
        <taxon>Histophilus</taxon>
    </lineage>
</organism>
<reference key="1">
    <citation type="submission" date="2008-02" db="EMBL/GenBank/DDBJ databases">
        <title>Complete sequence of Haemophilus somnus 2336.</title>
        <authorList>
            <consortium name="US DOE Joint Genome Institute"/>
            <person name="Siddaramappa S."/>
            <person name="Duncan A.J."/>
            <person name="Challacombe J.F."/>
            <person name="Rainey D."/>
            <person name="Gillaspy A.F."/>
            <person name="Carson M."/>
            <person name="Gipson J."/>
            <person name="Gipson M."/>
            <person name="Bruce D."/>
            <person name="Detter J.C."/>
            <person name="Han C.S."/>
            <person name="Land M."/>
            <person name="Tapia R."/>
            <person name="Thompson L.S."/>
            <person name="Orvis J."/>
            <person name="Zaitshik J."/>
            <person name="Barnes G."/>
            <person name="Brettin T.S."/>
            <person name="Dyer D.W."/>
            <person name="Inzana T.J."/>
        </authorList>
    </citation>
    <scope>NUCLEOTIDE SEQUENCE [LARGE SCALE GENOMIC DNA]</scope>
    <source>
        <strain>2336</strain>
    </source>
</reference>
<comment type="function">
    <text evidence="1">Specifically methylates guanosine-37 in various tRNAs.</text>
</comment>
<comment type="catalytic activity">
    <reaction evidence="1">
        <text>guanosine(37) in tRNA + S-adenosyl-L-methionine = N(1)-methylguanosine(37) in tRNA + S-adenosyl-L-homocysteine + H(+)</text>
        <dbReference type="Rhea" id="RHEA:36899"/>
        <dbReference type="Rhea" id="RHEA-COMP:10145"/>
        <dbReference type="Rhea" id="RHEA-COMP:10147"/>
        <dbReference type="ChEBI" id="CHEBI:15378"/>
        <dbReference type="ChEBI" id="CHEBI:57856"/>
        <dbReference type="ChEBI" id="CHEBI:59789"/>
        <dbReference type="ChEBI" id="CHEBI:73542"/>
        <dbReference type="ChEBI" id="CHEBI:74269"/>
        <dbReference type="EC" id="2.1.1.228"/>
    </reaction>
</comment>
<comment type="subunit">
    <text evidence="1">Homodimer.</text>
</comment>
<comment type="subcellular location">
    <subcellularLocation>
        <location evidence="1">Cytoplasm</location>
    </subcellularLocation>
</comment>
<comment type="similarity">
    <text evidence="1">Belongs to the RNA methyltransferase TrmD family.</text>
</comment>
<evidence type="ECO:0000255" key="1">
    <source>
        <dbReference type="HAMAP-Rule" id="MF_00605"/>
    </source>
</evidence>
<name>TRMD_HISS2</name>